<accession>B5BGJ7</accession>
<gene>
    <name evidence="1" type="primary">rimP</name>
    <name type="ordered locus">SSPA2946</name>
</gene>
<name>RIMP_SALPK</name>
<dbReference type="EMBL" id="FM200053">
    <property type="protein sequence ID" value="CAR61195.1"/>
    <property type="status" value="ALT_INIT"/>
    <property type="molecule type" value="Genomic_DNA"/>
</dbReference>
<dbReference type="SMR" id="B5BGJ7"/>
<dbReference type="KEGG" id="sek:SSPA2946"/>
<dbReference type="HOGENOM" id="CLU_070525_1_1_6"/>
<dbReference type="Proteomes" id="UP000001869">
    <property type="component" value="Chromosome"/>
</dbReference>
<dbReference type="GO" id="GO:0005829">
    <property type="term" value="C:cytosol"/>
    <property type="evidence" value="ECO:0007669"/>
    <property type="project" value="TreeGrafter"/>
</dbReference>
<dbReference type="GO" id="GO:0000028">
    <property type="term" value="P:ribosomal small subunit assembly"/>
    <property type="evidence" value="ECO:0007669"/>
    <property type="project" value="TreeGrafter"/>
</dbReference>
<dbReference type="GO" id="GO:0006412">
    <property type="term" value="P:translation"/>
    <property type="evidence" value="ECO:0007669"/>
    <property type="project" value="TreeGrafter"/>
</dbReference>
<dbReference type="CDD" id="cd01734">
    <property type="entry name" value="YlxS_C"/>
    <property type="match status" value="1"/>
</dbReference>
<dbReference type="FunFam" id="2.30.30.180:FF:000001">
    <property type="entry name" value="Ribosome maturation factor RimP"/>
    <property type="match status" value="1"/>
</dbReference>
<dbReference type="FunFam" id="3.30.300.70:FF:000001">
    <property type="entry name" value="Ribosome maturation factor RimP"/>
    <property type="match status" value="1"/>
</dbReference>
<dbReference type="Gene3D" id="2.30.30.180">
    <property type="entry name" value="Ribosome maturation factor RimP, C-terminal domain"/>
    <property type="match status" value="1"/>
</dbReference>
<dbReference type="Gene3D" id="3.30.300.70">
    <property type="entry name" value="RimP-like superfamily, N-terminal"/>
    <property type="match status" value="1"/>
</dbReference>
<dbReference type="HAMAP" id="MF_01077">
    <property type="entry name" value="RimP"/>
    <property type="match status" value="1"/>
</dbReference>
<dbReference type="InterPro" id="IPR003728">
    <property type="entry name" value="Ribosome_maturation_RimP"/>
</dbReference>
<dbReference type="InterPro" id="IPR028998">
    <property type="entry name" value="RimP_C"/>
</dbReference>
<dbReference type="InterPro" id="IPR036847">
    <property type="entry name" value="RimP_C_sf"/>
</dbReference>
<dbReference type="InterPro" id="IPR028989">
    <property type="entry name" value="RimP_N"/>
</dbReference>
<dbReference type="InterPro" id="IPR035956">
    <property type="entry name" value="RimP_N_sf"/>
</dbReference>
<dbReference type="NCBIfam" id="NF000927">
    <property type="entry name" value="PRK00092.1-1"/>
    <property type="match status" value="1"/>
</dbReference>
<dbReference type="PANTHER" id="PTHR33867">
    <property type="entry name" value="RIBOSOME MATURATION FACTOR RIMP"/>
    <property type="match status" value="1"/>
</dbReference>
<dbReference type="PANTHER" id="PTHR33867:SF1">
    <property type="entry name" value="RIBOSOME MATURATION FACTOR RIMP"/>
    <property type="match status" value="1"/>
</dbReference>
<dbReference type="Pfam" id="PF17384">
    <property type="entry name" value="DUF150_C"/>
    <property type="match status" value="1"/>
</dbReference>
<dbReference type="Pfam" id="PF02576">
    <property type="entry name" value="RimP_N"/>
    <property type="match status" value="1"/>
</dbReference>
<dbReference type="SUPFAM" id="SSF74942">
    <property type="entry name" value="YhbC-like, C-terminal domain"/>
    <property type="match status" value="1"/>
</dbReference>
<dbReference type="SUPFAM" id="SSF75420">
    <property type="entry name" value="YhbC-like, N-terminal domain"/>
    <property type="match status" value="1"/>
</dbReference>
<protein>
    <recommendedName>
        <fullName evidence="1">Ribosome maturation factor RimP</fullName>
    </recommendedName>
</protein>
<sequence length="152" mass="16840">MGLSTLEQKLTEMITAPVEALGYELVGIEFIRGRTSTLRIYIDSEDGINVDDCADVSHQVSAVLDVEDPISVAYNLEVSSPGLDRPMFTADHYARFQGEEVALVLRMAVQNRRKWQGIIKAVDGEMITVTVEGKDEVFALSNIQKANLVPHF</sequence>
<proteinExistence type="inferred from homology"/>
<feature type="chain" id="PRO_0000384764" description="Ribosome maturation factor RimP">
    <location>
        <begin position="1"/>
        <end position="152"/>
    </location>
</feature>
<organism>
    <name type="scientific">Salmonella paratyphi A (strain AKU_12601)</name>
    <dbReference type="NCBI Taxonomy" id="554290"/>
    <lineage>
        <taxon>Bacteria</taxon>
        <taxon>Pseudomonadati</taxon>
        <taxon>Pseudomonadota</taxon>
        <taxon>Gammaproteobacteria</taxon>
        <taxon>Enterobacterales</taxon>
        <taxon>Enterobacteriaceae</taxon>
        <taxon>Salmonella</taxon>
    </lineage>
</organism>
<reference key="1">
    <citation type="journal article" date="2009" name="BMC Genomics">
        <title>Pseudogene accumulation in the evolutionary histories of Salmonella enterica serovars Paratyphi A and Typhi.</title>
        <authorList>
            <person name="Holt K.E."/>
            <person name="Thomson N.R."/>
            <person name="Wain J."/>
            <person name="Langridge G.C."/>
            <person name="Hasan R."/>
            <person name="Bhutta Z.A."/>
            <person name="Quail M.A."/>
            <person name="Norbertczak H."/>
            <person name="Walker D."/>
            <person name="Simmonds M."/>
            <person name="White B."/>
            <person name="Bason N."/>
            <person name="Mungall K."/>
            <person name="Dougan G."/>
            <person name="Parkhill J."/>
        </authorList>
    </citation>
    <scope>NUCLEOTIDE SEQUENCE [LARGE SCALE GENOMIC DNA]</scope>
    <source>
        <strain>AKU_12601</strain>
    </source>
</reference>
<keyword id="KW-0963">Cytoplasm</keyword>
<keyword id="KW-0690">Ribosome biogenesis</keyword>
<evidence type="ECO:0000255" key="1">
    <source>
        <dbReference type="HAMAP-Rule" id="MF_01077"/>
    </source>
</evidence>
<evidence type="ECO:0000305" key="2"/>
<comment type="function">
    <text evidence="1">Required for maturation of 30S ribosomal subunits.</text>
</comment>
<comment type="subcellular location">
    <subcellularLocation>
        <location evidence="1">Cytoplasm</location>
    </subcellularLocation>
</comment>
<comment type="similarity">
    <text evidence="1">Belongs to the RimP family.</text>
</comment>
<comment type="sequence caution" evidence="2">
    <conflict type="erroneous initiation">
        <sequence resource="EMBL-CDS" id="CAR61195"/>
    </conflict>
</comment>